<name>ACDH_ARATH</name>
<evidence type="ECO:0000250" key="1">
    <source>
        <dbReference type="UniProtKB" id="O64587"/>
    </source>
</evidence>
<evidence type="ECO:0000303" key="2">
    <source>
    </source>
</evidence>
<evidence type="ECO:0000305" key="3"/>
<evidence type="ECO:0000305" key="4">
    <source>
    </source>
</evidence>
<evidence type="ECO:0000312" key="5">
    <source>
        <dbReference type="Araport" id="AT4G39670"/>
    </source>
</evidence>
<evidence type="ECO:0000312" key="6">
    <source>
        <dbReference type="EMBL" id="AAM83214.1"/>
    </source>
</evidence>
<evidence type="ECO:0000312" key="7">
    <source>
        <dbReference type="EMBL" id="CAA18753.1"/>
    </source>
</evidence>
<organism evidence="6">
    <name type="scientific">Arabidopsis thaliana</name>
    <name type="common">Mouse-ear cress</name>
    <dbReference type="NCBI Taxonomy" id="3702"/>
    <lineage>
        <taxon>Eukaryota</taxon>
        <taxon>Viridiplantae</taxon>
        <taxon>Streptophyta</taxon>
        <taxon>Embryophyta</taxon>
        <taxon>Tracheophyta</taxon>
        <taxon>Spermatophyta</taxon>
        <taxon>Magnoliopsida</taxon>
        <taxon>eudicotyledons</taxon>
        <taxon>Gunneridae</taxon>
        <taxon>Pentapetalae</taxon>
        <taxon>rosids</taxon>
        <taxon>malvids</taxon>
        <taxon>Brassicales</taxon>
        <taxon>Brassicaceae</taxon>
        <taxon>Camelineae</taxon>
        <taxon>Arabidopsis</taxon>
    </lineage>
</organism>
<accession>Q8L7U7</accession>
<accession>O65654</accession>
<sequence>MEAEVEEEEEDMFEDAVCTTQARVNTPLSVITEAFEDLADLVKPQRSDEIDEDELRLDDFCSACTHVSVLFNCLGFAFKFAEMEYIAKVKDLVEASKTFETLHNILDLDVEKETVKTPGSHSRNLRRVRQGLDLIRAIFEQFLIADDYSLKDAATTAYTEVCAPFHTWAVRTAVYAGMYTLPTRDQLLLRLNETDQSVEKNMRRYMEASRPIIEYIDKLYIERNIKLDW</sequence>
<gene>
    <name evidence="5" type="ordered locus">At4g39670</name>
    <name evidence="7" type="ORF">T19P19.60</name>
</gene>
<proteinExistence type="evidence at transcript level"/>
<keyword id="KW-0445">Lipid transport</keyword>
<keyword id="KW-1185">Reference proteome</keyword>
<keyword id="KW-0813">Transport</keyword>
<feature type="chain" id="PRO_0000432643" description="ACD11 homolog protein">
    <location>
        <begin position="1"/>
        <end position="229"/>
    </location>
</feature>
<feature type="binding site" evidence="1">
    <location>
        <position position="84"/>
    </location>
    <ligand>
        <name>an N-acylsphingoid base 1-phosphate</name>
        <dbReference type="ChEBI" id="CHEBI:84404"/>
    </ligand>
</feature>
<feature type="binding site" evidence="1">
    <location>
        <position position="88"/>
    </location>
    <ligand>
        <name>an N-acylsphingoid base 1-phosphate</name>
        <dbReference type="ChEBI" id="CHEBI:84404"/>
    </ligand>
</feature>
<feature type="binding site" evidence="1">
    <location>
        <position position="123"/>
    </location>
    <ligand>
        <name>an N-acylsphingoid base 1-phosphate</name>
        <dbReference type="ChEBI" id="CHEBI:84404"/>
    </ligand>
</feature>
<feature type="binding site" evidence="1">
    <location>
        <position position="127"/>
    </location>
    <ligand>
        <name>an N-acylsphingoid base 1-phosphate</name>
        <dbReference type="ChEBI" id="CHEBI:84404"/>
    </ligand>
</feature>
<feature type="binding site" evidence="1">
    <location>
        <position position="166"/>
    </location>
    <ligand>
        <name>an N-acylsphingoid base 1-phosphate</name>
        <dbReference type="ChEBI" id="CHEBI:84404"/>
    </ligand>
</feature>
<comment type="induction">
    <text evidence="4">Highly up-regulated during programmed cell death (PCD) induced in acd11 mutant.</text>
</comment>
<comment type="similarity">
    <text evidence="3">Belongs to the GLTP family.</text>
</comment>
<comment type="sequence caution" evidence="3">
    <conflict type="erroneous gene model prediction">
        <sequence resource="EMBL-CDS" id="CAA18753"/>
    </conflict>
</comment>
<comment type="sequence caution" evidence="3">
    <conflict type="erroneous gene model prediction">
        <sequence resource="EMBL-CDS" id="CAB80630"/>
    </conflict>
</comment>
<protein>
    <recommendedName>
        <fullName evidence="2">ACD11 homolog protein</fullName>
    </recommendedName>
    <alternativeName>
        <fullName evidence="3">Probable ceramide-1-phosphate transfer protein</fullName>
    </alternativeName>
</protein>
<reference key="1">
    <citation type="journal article" date="1999" name="Nature">
        <title>Sequence and analysis of chromosome 4 of the plant Arabidopsis thaliana.</title>
        <authorList>
            <person name="Mayer K.F.X."/>
            <person name="Schueller C."/>
            <person name="Wambutt R."/>
            <person name="Murphy G."/>
            <person name="Volckaert G."/>
            <person name="Pohl T."/>
            <person name="Duesterhoeft A."/>
            <person name="Stiekema W."/>
            <person name="Entian K.-D."/>
            <person name="Terryn N."/>
            <person name="Harris B."/>
            <person name="Ansorge W."/>
            <person name="Brandt P."/>
            <person name="Grivell L.A."/>
            <person name="Rieger M."/>
            <person name="Weichselgartner M."/>
            <person name="de Simone V."/>
            <person name="Obermaier B."/>
            <person name="Mache R."/>
            <person name="Mueller M."/>
            <person name="Kreis M."/>
            <person name="Delseny M."/>
            <person name="Puigdomenech P."/>
            <person name="Watson M."/>
            <person name="Schmidtheini T."/>
            <person name="Reichert B."/>
            <person name="Portetelle D."/>
            <person name="Perez-Alonso M."/>
            <person name="Boutry M."/>
            <person name="Bancroft I."/>
            <person name="Vos P."/>
            <person name="Hoheisel J."/>
            <person name="Zimmermann W."/>
            <person name="Wedler H."/>
            <person name="Ridley P."/>
            <person name="Langham S.-A."/>
            <person name="McCullagh B."/>
            <person name="Bilham L."/>
            <person name="Robben J."/>
            <person name="van der Schueren J."/>
            <person name="Grymonprez B."/>
            <person name="Chuang Y.-J."/>
            <person name="Vandenbussche F."/>
            <person name="Braeken M."/>
            <person name="Weltjens I."/>
            <person name="Voet M."/>
            <person name="Bastiaens I."/>
            <person name="Aert R."/>
            <person name="Defoor E."/>
            <person name="Weitzenegger T."/>
            <person name="Bothe G."/>
            <person name="Ramsperger U."/>
            <person name="Hilbert H."/>
            <person name="Braun M."/>
            <person name="Holzer E."/>
            <person name="Brandt A."/>
            <person name="Peters S."/>
            <person name="van Staveren M."/>
            <person name="Dirkse W."/>
            <person name="Mooijman P."/>
            <person name="Klein Lankhorst R."/>
            <person name="Rose M."/>
            <person name="Hauf J."/>
            <person name="Koetter P."/>
            <person name="Berneiser S."/>
            <person name="Hempel S."/>
            <person name="Feldpausch M."/>
            <person name="Lamberth S."/>
            <person name="Van den Daele H."/>
            <person name="De Keyser A."/>
            <person name="Buysshaert C."/>
            <person name="Gielen J."/>
            <person name="Villarroel R."/>
            <person name="De Clercq R."/>
            <person name="van Montagu M."/>
            <person name="Rogers J."/>
            <person name="Cronin A."/>
            <person name="Quail M.A."/>
            <person name="Bray-Allen S."/>
            <person name="Clark L."/>
            <person name="Doggett J."/>
            <person name="Hall S."/>
            <person name="Kay M."/>
            <person name="Lennard N."/>
            <person name="McLay K."/>
            <person name="Mayes R."/>
            <person name="Pettett A."/>
            <person name="Rajandream M.A."/>
            <person name="Lyne M."/>
            <person name="Benes V."/>
            <person name="Rechmann S."/>
            <person name="Borkova D."/>
            <person name="Bloecker H."/>
            <person name="Scharfe M."/>
            <person name="Grimm M."/>
            <person name="Loehnert T.-H."/>
            <person name="Dose S."/>
            <person name="de Haan M."/>
            <person name="Maarse A.C."/>
            <person name="Schaefer M."/>
            <person name="Mueller-Auer S."/>
            <person name="Gabel C."/>
            <person name="Fuchs M."/>
            <person name="Fartmann B."/>
            <person name="Granderath K."/>
            <person name="Dauner D."/>
            <person name="Herzl A."/>
            <person name="Neumann S."/>
            <person name="Argiriou A."/>
            <person name="Vitale D."/>
            <person name="Liguori R."/>
            <person name="Piravandi E."/>
            <person name="Massenet O."/>
            <person name="Quigley F."/>
            <person name="Clabauld G."/>
            <person name="Muendlein A."/>
            <person name="Felber R."/>
            <person name="Schnabl S."/>
            <person name="Hiller R."/>
            <person name="Schmidt W."/>
            <person name="Lecharny A."/>
            <person name="Aubourg S."/>
            <person name="Chefdor F."/>
            <person name="Cooke R."/>
            <person name="Berger C."/>
            <person name="Monfort A."/>
            <person name="Casacuberta E."/>
            <person name="Gibbons T."/>
            <person name="Weber N."/>
            <person name="Vandenbol M."/>
            <person name="Bargues M."/>
            <person name="Terol J."/>
            <person name="Torres A."/>
            <person name="Perez-Perez A."/>
            <person name="Purnelle B."/>
            <person name="Bent E."/>
            <person name="Johnson S."/>
            <person name="Tacon D."/>
            <person name="Jesse T."/>
            <person name="Heijnen L."/>
            <person name="Schwarz S."/>
            <person name="Scholler P."/>
            <person name="Heber S."/>
            <person name="Francs P."/>
            <person name="Bielke C."/>
            <person name="Frishman D."/>
            <person name="Haase D."/>
            <person name="Lemcke K."/>
            <person name="Mewes H.-W."/>
            <person name="Stocker S."/>
            <person name="Zaccaria P."/>
            <person name="Bevan M."/>
            <person name="Wilson R.K."/>
            <person name="de la Bastide M."/>
            <person name="Habermann K."/>
            <person name="Parnell L."/>
            <person name="Dedhia N."/>
            <person name="Gnoj L."/>
            <person name="Schutz K."/>
            <person name="Huang E."/>
            <person name="Spiegel L."/>
            <person name="Sekhon M."/>
            <person name="Murray J."/>
            <person name="Sheet P."/>
            <person name="Cordes M."/>
            <person name="Abu-Threideh J."/>
            <person name="Stoneking T."/>
            <person name="Kalicki J."/>
            <person name="Graves T."/>
            <person name="Harmon G."/>
            <person name="Edwards J."/>
            <person name="Latreille P."/>
            <person name="Courtney L."/>
            <person name="Cloud J."/>
            <person name="Abbott A."/>
            <person name="Scott K."/>
            <person name="Johnson D."/>
            <person name="Minx P."/>
            <person name="Bentley D."/>
            <person name="Fulton B."/>
            <person name="Miller N."/>
            <person name="Greco T."/>
            <person name="Kemp K."/>
            <person name="Kramer J."/>
            <person name="Fulton L."/>
            <person name="Mardis E."/>
            <person name="Dante M."/>
            <person name="Pepin K."/>
            <person name="Hillier L.W."/>
            <person name="Nelson J."/>
            <person name="Spieth J."/>
            <person name="Ryan E."/>
            <person name="Andrews S."/>
            <person name="Geisel C."/>
            <person name="Layman D."/>
            <person name="Du H."/>
            <person name="Ali J."/>
            <person name="Berghoff A."/>
            <person name="Jones K."/>
            <person name="Drone K."/>
            <person name="Cotton M."/>
            <person name="Joshu C."/>
            <person name="Antonoiu B."/>
            <person name="Zidanic M."/>
            <person name="Strong C."/>
            <person name="Sun H."/>
            <person name="Lamar B."/>
            <person name="Yordan C."/>
            <person name="Ma P."/>
            <person name="Zhong J."/>
            <person name="Preston R."/>
            <person name="Vil D."/>
            <person name="Shekher M."/>
            <person name="Matero A."/>
            <person name="Shah R."/>
            <person name="Swaby I.K."/>
            <person name="O'Shaughnessy A."/>
            <person name="Rodriguez M."/>
            <person name="Hoffman J."/>
            <person name="Till S."/>
            <person name="Granat S."/>
            <person name="Shohdy N."/>
            <person name="Hasegawa A."/>
            <person name="Hameed A."/>
            <person name="Lodhi M."/>
            <person name="Johnson A."/>
            <person name="Chen E."/>
            <person name="Marra M.A."/>
            <person name="Martienssen R."/>
            <person name="McCombie W.R."/>
        </authorList>
    </citation>
    <scope>NUCLEOTIDE SEQUENCE [LARGE SCALE GENOMIC DNA]</scope>
    <source>
        <strain>cv. Columbia</strain>
    </source>
</reference>
<reference key="2">
    <citation type="journal article" date="2017" name="Plant J.">
        <title>Araport11: a complete reannotation of the Arabidopsis thaliana reference genome.</title>
        <authorList>
            <person name="Cheng C.Y."/>
            <person name="Krishnakumar V."/>
            <person name="Chan A.P."/>
            <person name="Thibaud-Nissen F."/>
            <person name="Schobel S."/>
            <person name="Town C.D."/>
        </authorList>
    </citation>
    <scope>GENOME REANNOTATION</scope>
    <source>
        <strain>cv. Columbia</strain>
    </source>
</reference>
<reference key="3">
    <citation type="journal article" date="2003" name="Science">
        <title>Empirical analysis of transcriptional activity in the Arabidopsis genome.</title>
        <authorList>
            <person name="Yamada K."/>
            <person name="Lim J."/>
            <person name="Dale J.M."/>
            <person name="Chen H."/>
            <person name="Shinn P."/>
            <person name="Palm C.J."/>
            <person name="Southwick A.M."/>
            <person name="Wu H.C."/>
            <person name="Kim C.J."/>
            <person name="Nguyen M."/>
            <person name="Pham P.K."/>
            <person name="Cheuk R.F."/>
            <person name="Karlin-Newmann G."/>
            <person name="Liu S.X."/>
            <person name="Lam B."/>
            <person name="Sakano H."/>
            <person name="Wu T."/>
            <person name="Yu G."/>
            <person name="Miranda M."/>
            <person name="Quach H.L."/>
            <person name="Tripp M."/>
            <person name="Chang C.H."/>
            <person name="Lee J.M."/>
            <person name="Toriumi M.J."/>
            <person name="Chan M.M."/>
            <person name="Tang C.C."/>
            <person name="Onodera C.S."/>
            <person name="Deng J.M."/>
            <person name="Akiyama K."/>
            <person name="Ansari Y."/>
            <person name="Arakawa T."/>
            <person name="Banh J."/>
            <person name="Banno F."/>
            <person name="Bowser L."/>
            <person name="Brooks S.Y."/>
            <person name="Carninci P."/>
            <person name="Chao Q."/>
            <person name="Choy N."/>
            <person name="Enju A."/>
            <person name="Goldsmith A.D."/>
            <person name="Gurjal M."/>
            <person name="Hansen N.F."/>
            <person name="Hayashizaki Y."/>
            <person name="Johnson-Hopson C."/>
            <person name="Hsuan V.W."/>
            <person name="Iida K."/>
            <person name="Karnes M."/>
            <person name="Khan S."/>
            <person name="Koesema E."/>
            <person name="Ishida J."/>
            <person name="Jiang P.X."/>
            <person name="Jones T."/>
            <person name="Kawai J."/>
            <person name="Kamiya A."/>
            <person name="Meyers C."/>
            <person name="Nakajima M."/>
            <person name="Narusaka M."/>
            <person name="Seki M."/>
            <person name="Sakurai T."/>
            <person name="Satou M."/>
            <person name="Tamse R."/>
            <person name="Vaysberg M."/>
            <person name="Wallender E.K."/>
            <person name="Wong C."/>
            <person name="Yamamura Y."/>
            <person name="Yuan S."/>
            <person name="Shinozaki K."/>
            <person name="Davis R.W."/>
            <person name="Theologis A."/>
            <person name="Ecker J.R."/>
        </authorList>
    </citation>
    <scope>NUCLEOTIDE SEQUENCE [LARGE SCALE MRNA]</scope>
    <source>
        <strain>cv. Columbia</strain>
    </source>
</reference>
<reference key="4">
    <citation type="journal article" date="2002" name="Genes Dev.">
        <title>Knockout of Arabidopsis accelerated-cell-death11 encoding a sphingosine transfer protein causes activation of programmed cell death and defense.</title>
        <authorList>
            <person name="Brodersen P."/>
            <person name="Petersen M."/>
            <person name="Pike H.M."/>
            <person name="Olszak B."/>
            <person name="Skov S."/>
            <person name="Odum N."/>
            <person name="Jorgensen L.B."/>
            <person name="Brown R.E."/>
            <person name="Mundy J."/>
        </authorList>
    </citation>
    <scope>IDENTIFICATION</scope>
</reference>
<reference key="5">
    <citation type="journal article" date="2008" name="FEBS J.">
        <title>Human GLTP and mutant forms of ACD11 suppress cell death in the Arabidopsis acd11 mutant.</title>
        <authorList>
            <person name="Petersen N.H."/>
            <person name="McKinney L.V."/>
            <person name="Pike H."/>
            <person name="Hofius D."/>
            <person name="Zakaria A."/>
            <person name="Brodersen P."/>
            <person name="Petersen M."/>
            <person name="Brown R.E."/>
            <person name="Mundy J."/>
        </authorList>
    </citation>
    <scope>INDUCTION</scope>
</reference>
<dbReference type="EMBL" id="AL022605">
    <property type="protein sequence ID" value="CAA18753.1"/>
    <property type="status" value="ALT_SEQ"/>
    <property type="molecule type" value="Genomic_DNA"/>
</dbReference>
<dbReference type="EMBL" id="AL161595">
    <property type="protein sequence ID" value="CAB80630.1"/>
    <property type="status" value="ALT_SEQ"/>
    <property type="molecule type" value="Genomic_DNA"/>
</dbReference>
<dbReference type="EMBL" id="CP002687">
    <property type="protein sequence ID" value="AEE87101.1"/>
    <property type="molecule type" value="Genomic_DNA"/>
</dbReference>
<dbReference type="EMBL" id="AY126985">
    <property type="protein sequence ID" value="AAM83214.1"/>
    <property type="molecule type" value="mRNA"/>
</dbReference>
<dbReference type="EMBL" id="BT000526">
    <property type="protein sequence ID" value="AAN18095.1"/>
    <property type="molecule type" value="mRNA"/>
</dbReference>
<dbReference type="PIR" id="T05004">
    <property type="entry name" value="T05004"/>
</dbReference>
<dbReference type="RefSeq" id="NP_195677.2">
    <property type="nucleotide sequence ID" value="NM_120127.3"/>
</dbReference>
<dbReference type="SMR" id="Q8L7U7"/>
<dbReference type="FunCoup" id="Q8L7U7">
    <property type="interactions" value="567"/>
</dbReference>
<dbReference type="IntAct" id="Q8L7U7">
    <property type="interactions" value="1"/>
</dbReference>
<dbReference type="STRING" id="3702.Q8L7U7"/>
<dbReference type="PaxDb" id="3702-AT4G39670.1"/>
<dbReference type="ProteomicsDB" id="244640"/>
<dbReference type="EnsemblPlants" id="AT4G39670.1">
    <property type="protein sequence ID" value="AT4G39670.1"/>
    <property type="gene ID" value="AT4G39670"/>
</dbReference>
<dbReference type="GeneID" id="830121"/>
<dbReference type="Gramene" id="AT4G39670.1">
    <property type="protein sequence ID" value="AT4G39670.1"/>
    <property type="gene ID" value="AT4G39670"/>
</dbReference>
<dbReference type="KEGG" id="ath:AT4G39670"/>
<dbReference type="Araport" id="AT4G39670"/>
<dbReference type="TAIR" id="AT4G39670">
    <property type="gene designation" value="GLTP"/>
</dbReference>
<dbReference type="eggNOG" id="KOG4189">
    <property type="taxonomic scope" value="Eukaryota"/>
</dbReference>
<dbReference type="HOGENOM" id="CLU_082630_1_0_1"/>
<dbReference type="InParanoid" id="Q8L7U7"/>
<dbReference type="OMA" id="WTIRTAV"/>
<dbReference type="PhylomeDB" id="Q8L7U7"/>
<dbReference type="PRO" id="PR:Q8L7U7"/>
<dbReference type="Proteomes" id="UP000006548">
    <property type="component" value="Chromosome 4"/>
</dbReference>
<dbReference type="ExpressionAtlas" id="Q8L7U7">
    <property type="expression patterns" value="baseline and differential"/>
</dbReference>
<dbReference type="GO" id="GO:0005737">
    <property type="term" value="C:cytoplasm"/>
    <property type="evidence" value="ECO:0000314"/>
    <property type="project" value="TAIR"/>
</dbReference>
<dbReference type="GO" id="GO:0005634">
    <property type="term" value="C:nucleus"/>
    <property type="evidence" value="ECO:0000314"/>
    <property type="project" value="TAIR"/>
</dbReference>
<dbReference type="GO" id="GO:1902388">
    <property type="term" value="F:ceramide 1-phosphate transfer activity"/>
    <property type="evidence" value="ECO:0000314"/>
    <property type="project" value="TAIR"/>
</dbReference>
<dbReference type="FunFam" id="1.10.3520.10:FF:000005">
    <property type="entry name" value="Accelerated cell death 11"/>
    <property type="match status" value="1"/>
</dbReference>
<dbReference type="Gene3D" id="1.10.3520.10">
    <property type="entry name" value="Glycolipid transfer protein"/>
    <property type="match status" value="1"/>
</dbReference>
<dbReference type="InterPro" id="IPR036497">
    <property type="entry name" value="GLTP_sf"/>
</dbReference>
<dbReference type="InterPro" id="IPR014830">
    <property type="entry name" value="Glycolipid_transfer_prot_dom"/>
</dbReference>
<dbReference type="PANTHER" id="PTHR10219:SF28">
    <property type="entry name" value="ACD11 HOMOLOG PROTEIN"/>
    <property type="match status" value="1"/>
</dbReference>
<dbReference type="PANTHER" id="PTHR10219">
    <property type="entry name" value="GLYCOLIPID TRANSFER PROTEIN-RELATED"/>
    <property type="match status" value="1"/>
</dbReference>
<dbReference type="Pfam" id="PF08718">
    <property type="entry name" value="GLTP"/>
    <property type="match status" value="1"/>
</dbReference>
<dbReference type="SUPFAM" id="SSF110004">
    <property type="entry name" value="Glycolipid transfer protein, GLTP"/>
    <property type="match status" value="1"/>
</dbReference>